<comment type="function">
    <text evidence="1">Catalytic subunit of the glycosylphosphatidylinositol-anchor (GPI-anchor) transamidase (GPI-T) complex that catalyzes the formation of the linkage between a proprotein and a GPI-anchor and participates in GPI anchored protein biosynthesis. Recognizes diverse proproteins at a C-terminal signal peptide (CSP) region that lacks consensus sequence and replaces it with a GPI-anchor via a transamidation reaction. Transamidation catalysis reaction follows a two-phase mechanism. In the acyl-enzyme phase, the carbonyl group of the proproteins's omega-site undergoes a nucleophilic attack forming an enzyme-substrate thioester bond. Followed by a general acid catalysis that allows CSP releasing, regenerating the carbonyl, and forming the acyl-enzyme intermediate. In the GPI-anchor attachment phase, the amino group of the GPI-anchor's ethanolamine phosphate, the one on third mannose (EtNP3), mediates a nucleophilic attack on the carbonyl of the acyl-enzyme intermediate, replacing the CSP, allowing GPI-anchor attachment to the omega-residue, therefore forming the product and freeing the enzyme.</text>
</comment>
<comment type="activity regulation">
    <text evidence="1">In the absence of proproteins substrates, exists in an inactive state with a disrupted catalytic site by an autoinhibitory loop. The binding of proprotein substrates, particularly the CSP region, to GPI-T triggers concerted conformational changes that alleviate the inhibition by the autoinhibitory loop. Meanwhile, proprotein residues near the omega- site induce the formation of a catalytic cleft for catalysis, following which the products are released and GPI-T reverts to the inactive state.</text>
</comment>
<comment type="pathway">
    <text evidence="1">Glycolipid biosynthesis; glycosylphosphatidylinositol-anchor biosynthesis.</text>
</comment>
<comment type="subunit">
    <text evidence="1">Heteropentamer. Part of the GPI-anchor transamidase complex, consisting of PIGK, PIGT, PIGS, PIGU and GAA1. Interacts with GPAA1. Interacts with PIGT; this interaction, via a disulfide link, stabilizes the expression of GAA1 and PIGK and links them to PIGS.</text>
</comment>
<comment type="subcellular location">
    <subcellularLocation>
        <location evidence="1">Endoplasmic reticulum membrane</location>
        <topology evidence="1">Single-pass type I membrane protein</topology>
    </subcellularLocation>
</comment>
<comment type="PTM">
    <text evidence="1">The disulfide bond between PIGK/GPI8 and PIGT is important for normal enzyme activity.</text>
</comment>
<comment type="similarity">
    <text evidence="2">Belongs to the peptidase C13 family.</text>
</comment>
<dbReference type="EC" id="2.6.1.-" evidence="1"/>
<dbReference type="EMBL" id="AY914076">
    <property type="protein sequence ID" value="AAX97505.1"/>
    <property type="molecule type" value="mRNA"/>
</dbReference>
<dbReference type="RefSeq" id="NP_001027529.1">
    <property type="nucleotide sequence ID" value="NM_001032358.1"/>
</dbReference>
<dbReference type="SMR" id="Q4KRV1"/>
<dbReference type="FunCoup" id="Q4KRV1">
    <property type="interactions" value="1315"/>
</dbReference>
<dbReference type="STRING" id="9823.ENSSSCP00000042340"/>
<dbReference type="MEROPS" id="C13.005"/>
<dbReference type="PeptideAtlas" id="Q4KRV1"/>
<dbReference type="GeneID" id="606750"/>
<dbReference type="KEGG" id="ssc:606750"/>
<dbReference type="CTD" id="10026"/>
<dbReference type="InParanoid" id="Q4KRV1"/>
<dbReference type="OrthoDB" id="192611at2759"/>
<dbReference type="UniPathway" id="UPA00196"/>
<dbReference type="Proteomes" id="UP000008227">
    <property type="component" value="Unplaced"/>
</dbReference>
<dbReference type="Proteomes" id="UP000314985">
    <property type="component" value="Unplaced"/>
</dbReference>
<dbReference type="Proteomes" id="UP000694570">
    <property type="component" value="Unplaced"/>
</dbReference>
<dbReference type="Proteomes" id="UP000694571">
    <property type="component" value="Unplaced"/>
</dbReference>
<dbReference type="Proteomes" id="UP000694720">
    <property type="component" value="Unplaced"/>
</dbReference>
<dbReference type="Proteomes" id="UP000694722">
    <property type="component" value="Unplaced"/>
</dbReference>
<dbReference type="Proteomes" id="UP000694723">
    <property type="component" value="Unplaced"/>
</dbReference>
<dbReference type="Proteomes" id="UP000694724">
    <property type="component" value="Unplaced"/>
</dbReference>
<dbReference type="Proteomes" id="UP000694725">
    <property type="component" value="Unplaced"/>
</dbReference>
<dbReference type="Proteomes" id="UP000694726">
    <property type="component" value="Unplaced"/>
</dbReference>
<dbReference type="Proteomes" id="UP000694727">
    <property type="component" value="Unplaced"/>
</dbReference>
<dbReference type="Proteomes" id="UP000694728">
    <property type="component" value="Unplaced"/>
</dbReference>
<dbReference type="GO" id="GO:0042765">
    <property type="term" value="C:GPI-anchor transamidase complex"/>
    <property type="evidence" value="ECO:0000250"/>
    <property type="project" value="UniProtKB"/>
</dbReference>
<dbReference type="GO" id="GO:0003923">
    <property type="term" value="F:GPI-anchor transamidase activity"/>
    <property type="evidence" value="ECO:0000250"/>
    <property type="project" value="UniProtKB"/>
</dbReference>
<dbReference type="GO" id="GO:0016255">
    <property type="term" value="P:attachment of GPI anchor to protein"/>
    <property type="evidence" value="ECO:0000250"/>
    <property type="project" value="UniProtKB"/>
</dbReference>
<dbReference type="GO" id="GO:0006506">
    <property type="term" value="P:GPI anchor biosynthetic process"/>
    <property type="evidence" value="ECO:0007669"/>
    <property type="project" value="UniProtKB-UniPathway"/>
</dbReference>
<dbReference type="GO" id="GO:0006508">
    <property type="term" value="P:proteolysis"/>
    <property type="evidence" value="ECO:0007669"/>
    <property type="project" value="UniProtKB-KW"/>
</dbReference>
<dbReference type="FunFam" id="3.40.50.1460:FF:000002">
    <property type="entry name" value="GPI-anchor transamidase"/>
    <property type="match status" value="1"/>
</dbReference>
<dbReference type="Gene3D" id="3.40.50.1460">
    <property type="match status" value="1"/>
</dbReference>
<dbReference type="InterPro" id="IPR028361">
    <property type="entry name" value="GPI_transamidase"/>
</dbReference>
<dbReference type="InterPro" id="IPR001096">
    <property type="entry name" value="Peptidase_C13"/>
</dbReference>
<dbReference type="PANTHER" id="PTHR48067">
    <property type="entry name" value="GPI-ANCHOR TRANSAMIDASE"/>
    <property type="match status" value="1"/>
</dbReference>
<dbReference type="PANTHER" id="PTHR48067:SF1">
    <property type="entry name" value="GPI-ANCHOR TRANSAMIDASE"/>
    <property type="match status" value="1"/>
</dbReference>
<dbReference type="Pfam" id="PF01650">
    <property type="entry name" value="Peptidase_C13"/>
    <property type="match status" value="1"/>
</dbReference>
<dbReference type="PIRSF" id="PIRSF500138">
    <property type="entry name" value="GPI8"/>
    <property type="match status" value="1"/>
</dbReference>
<dbReference type="PIRSF" id="PIRSF019663">
    <property type="entry name" value="Legumain"/>
    <property type="match status" value="1"/>
</dbReference>
<dbReference type="PRINTS" id="PR00776">
    <property type="entry name" value="HEMOGLOBNASE"/>
</dbReference>
<reference key="1">
    <citation type="submission" date="2005-01" db="EMBL/GenBank/DDBJ databases">
        <title>Mutation detection of porcine PIGK gene.</title>
        <authorList>
            <person name="Jeon J.T."/>
            <person name="Lim H.T."/>
            <person name="Kim J.H."/>
            <person name="Seo B.Y."/>
            <person name="Lee S.H."/>
            <person name="Lee J.B."/>
        </authorList>
    </citation>
    <scope>NUCLEOTIDE SEQUENCE [MRNA]</scope>
</reference>
<feature type="signal peptide" evidence="1">
    <location>
        <begin position="1"/>
        <end position="27"/>
    </location>
</feature>
<feature type="chain" id="PRO_0000230996" description="GPI-anchor transamidase">
    <location>
        <begin position="28"/>
        <end position="395"/>
    </location>
</feature>
<feature type="topological domain" description="Lumenal" evidence="1">
    <location>
        <begin position="28"/>
        <end position="368"/>
    </location>
</feature>
<feature type="transmembrane region" description="Helical" evidence="1">
    <location>
        <begin position="369"/>
        <end position="385"/>
    </location>
</feature>
<feature type="topological domain" description="Cytoplasmic" evidence="1">
    <location>
        <begin position="386"/>
        <end position="395"/>
    </location>
</feature>
<feature type="region of interest" description="Autoinhibitory loop" evidence="1">
    <location>
        <begin position="231"/>
        <end position="236"/>
    </location>
</feature>
<feature type="active site" description="Proton donor" evidence="1">
    <location>
        <position position="164"/>
    </location>
</feature>
<feature type="active site" description="Nucleophile; acyl-thioester intermediate" evidence="1">
    <location>
        <position position="206"/>
    </location>
</feature>
<feature type="binding site" evidence="1">
    <location>
        <position position="79"/>
    </location>
    <ligand>
        <name>Ca(2+)</name>
        <dbReference type="ChEBI" id="CHEBI:29108"/>
    </ligand>
</feature>
<feature type="binding site" evidence="1">
    <location>
        <position position="82"/>
    </location>
    <ligand>
        <name>Ca(2+)</name>
        <dbReference type="ChEBI" id="CHEBI:29108"/>
    </ligand>
</feature>
<feature type="binding site" evidence="1">
    <location>
        <position position="118"/>
    </location>
    <ligand>
        <name>Ca(2+)</name>
        <dbReference type="ChEBI" id="CHEBI:29108"/>
    </ligand>
</feature>
<feature type="binding site" evidence="1">
    <location>
        <position position="120"/>
    </location>
    <ligand>
        <name>Ca(2+)</name>
        <dbReference type="ChEBI" id="CHEBI:29108"/>
    </ligand>
</feature>
<feature type="binding site" evidence="1">
    <location>
        <position position="206"/>
    </location>
    <ligand>
        <name>a protein</name>
        <dbReference type="ChEBI" id="CHEBI:16541"/>
    </ligand>
    <ligandPart>
        <name>GPI-anchor amidated serine</name>
    </ligandPart>
</feature>
<feature type="binding site" evidence="1">
    <location>
        <position position="232"/>
    </location>
    <ligand>
        <name>a protein</name>
        <dbReference type="ChEBI" id="CHEBI:16541"/>
    </ligand>
    <ligandPart>
        <name>GPI-anchor amidated serine</name>
    </ligandPart>
</feature>
<feature type="binding site" evidence="1">
    <location>
        <position position="234"/>
    </location>
    <ligand>
        <name>a protein</name>
        <dbReference type="ChEBI" id="CHEBI:16541"/>
    </ligand>
    <ligandPart>
        <name>L-serine residue</name>
        <dbReference type="ChEBI" id="CHEBI:29999"/>
    </ligandPart>
</feature>
<feature type="disulfide bond" description="Interchain (with C-182 in PIGT)" evidence="1">
    <location>
        <position position="92"/>
    </location>
</feature>
<feature type="disulfide bond" evidence="1">
    <location>
        <begin position="275"/>
        <end position="280"/>
    </location>
</feature>
<evidence type="ECO:0000250" key="1">
    <source>
        <dbReference type="UniProtKB" id="Q92643"/>
    </source>
</evidence>
<evidence type="ECO:0000305" key="2"/>
<proteinExistence type="evidence at transcript level"/>
<name>GPI8_PIG</name>
<sequence length="395" mass="45142">MVGTWFLCRGFTTLAGLLLLPFGSLAASQIEDQAEQFFRSGHTNNWAVLVCTSRFWFNYRHVANTLSVYRSVKRLGIPDSHIVLMLADDMACNPRNPKPATVYSHKNMELNVYGDDVEVDYRSYVVTVENFLRVLTGRIPPSTPRSKRLLSDDRSNILIYMTGHGGNGFLKFQDSEEITNIELADAFEQMWQKRRYNELLFIIDTCQGASMYERFYSPNIMALASSQVGEDSLSHQPDPAIGVHLMDRYTFYVLEFLEEINPASQTNMNDLFQVCPKSLCVSTPGHRTDPFQRDPKHVLITDFFGSVRKVEITTETISLQPDSGIMKSSHEKAGMDEELMEPLKYAEQLPVAQIIHQKPKLKDWHPPGGFILGLWALIIMVFFKTYGIKHMKFIF</sequence>
<accession>Q4KRV1</accession>
<keyword id="KW-0106">Calcium</keyword>
<keyword id="KW-1015">Disulfide bond</keyword>
<keyword id="KW-0256">Endoplasmic reticulum</keyword>
<keyword id="KW-0337">GPI-anchor biosynthesis</keyword>
<keyword id="KW-0472">Membrane</keyword>
<keyword id="KW-0479">Metal-binding</keyword>
<keyword id="KW-1185">Reference proteome</keyword>
<keyword id="KW-0732">Signal</keyword>
<keyword id="KW-0808">Transferase</keyword>
<keyword id="KW-0812">Transmembrane</keyword>
<keyword id="KW-1133">Transmembrane helix</keyword>
<protein>
    <recommendedName>
        <fullName evidence="1">GPI-anchor transamidase</fullName>
        <ecNumber evidence="1">2.6.1.-</ecNumber>
    </recommendedName>
    <alternativeName>
        <fullName>GPI-anchor transamidase component PIGK</fullName>
    </alternativeName>
    <alternativeName>
        <fullName>Phosphatidylinositol-glycan biosynthesis class K protein</fullName>
        <shortName>PIG-K</shortName>
    </alternativeName>
</protein>
<gene>
    <name evidence="1" type="primary">PIGK</name>
</gene>
<organism>
    <name type="scientific">Sus scrofa</name>
    <name type="common">Pig</name>
    <dbReference type="NCBI Taxonomy" id="9823"/>
    <lineage>
        <taxon>Eukaryota</taxon>
        <taxon>Metazoa</taxon>
        <taxon>Chordata</taxon>
        <taxon>Craniata</taxon>
        <taxon>Vertebrata</taxon>
        <taxon>Euteleostomi</taxon>
        <taxon>Mammalia</taxon>
        <taxon>Eutheria</taxon>
        <taxon>Laurasiatheria</taxon>
        <taxon>Artiodactyla</taxon>
        <taxon>Suina</taxon>
        <taxon>Suidae</taxon>
        <taxon>Sus</taxon>
    </lineage>
</organism>